<proteinExistence type="inferred from homology"/>
<accession>B4EZU4</accession>
<protein>
    <recommendedName>
        <fullName evidence="1">Chaperone protein HscA</fullName>
    </recommendedName>
    <alternativeName>
        <fullName evidence="1">Hsc66</fullName>
    </alternativeName>
</protein>
<sequence length="616" mass="66635">MSLLQISEPGQTPAPHQRRLAAGIDLGTTHSLVATVRSGQAEALSDSEGRYLLPSVVQYQVDNINVGWQAKQEAEKDPANTISSIKRMLGRSLNDITSRYPNLPYHFHDNDSGLPLIKTPAGIVDPIQVSADILKALAERAIQSLGGELDGVVVTVPAYFDDAQRQGTKEAARRAGLHVLRLLNEPTAAAIAYGLDSGKEGTIVVYDLGGGTFDISVLRLTKGVFEVLATGGDTALGGDDFDMMLADWIRERAGFGYQNDVILQRQLLDIASETKIALSDNDVADININGWKGEITRAEFELLIQPLVKRTLLSVRRALKDADVDVDEVLEVVMVGGSTRVPLVRQMVGDYFKREPLTSIDPDKVVAIGASIQADILVGNKPDSEMLLLDVIPLSLGLETMGGLVEKVIPRNTTIPVARAQEFTTFKDGQTAMSVHVVQGEREMVSDCRSLARFTLRGIPPMAAGGAHIRVTFQVDADGLLSVSAMEKSTGVEASVQVKPSYGLSDTEIANMIQSSMENAKEDLQARRLAEQKVEAARVLESLTAALQEDAHLLTEDEKTAIDNVVDTLIESVEGTDPVAIENAIKQLDKQTQEFAARRMDTSIRQALAGHSVDEI</sequence>
<organism>
    <name type="scientific">Proteus mirabilis (strain HI4320)</name>
    <dbReference type="NCBI Taxonomy" id="529507"/>
    <lineage>
        <taxon>Bacteria</taxon>
        <taxon>Pseudomonadati</taxon>
        <taxon>Pseudomonadota</taxon>
        <taxon>Gammaproteobacteria</taxon>
        <taxon>Enterobacterales</taxon>
        <taxon>Morganellaceae</taxon>
        <taxon>Proteus</taxon>
    </lineage>
</organism>
<feature type="chain" id="PRO_1000131683" description="Chaperone protein HscA">
    <location>
        <begin position="1"/>
        <end position="616"/>
    </location>
</feature>
<dbReference type="EMBL" id="AM942759">
    <property type="protein sequence ID" value="CAR43848.1"/>
    <property type="molecule type" value="Genomic_DNA"/>
</dbReference>
<dbReference type="RefSeq" id="WP_012368127.1">
    <property type="nucleotide sequence ID" value="NC_010554.1"/>
</dbReference>
<dbReference type="SMR" id="B4EZU4"/>
<dbReference type="EnsemblBacteria" id="CAR43848">
    <property type="protein sequence ID" value="CAR43848"/>
    <property type="gene ID" value="PMI1856"/>
</dbReference>
<dbReference type="GeneID" id="6801330"/>
<dbReference type="KEGG" id="pmr:PMI1856"/>
<dbReference type="PATRIC" id="fig|529507.6.peg.1808"/>
<dbReference type="eggNOG" id="COG0443">
    <property type="taxonomic scope" value="Bacteria"/>
</dbReference>
<dbReference type="HOGENOM" id="CLU_005965_2_1_6"/>
<dbReference type="Proteomes" id="UP000008319">
    <property type="component" value="Chromosome"/>
</dbReference>
<dbReference type="GO" id="GO:0005524">
    <property type="term" value="F:ATP binding"/>
    <property type="evidence" value="ECO:0007669"/>
    <property type="project" value="UniProtKB-KW"/>
</dbReference>
<dbReference type="GO" id="GO:0016887">
    <property type="term" value="F:ATP hydrolysis activity"/>
    <property type="evidence" value="ECO:0007669"/>
    <property type="project" value="UniProtKB-UniRule"/>
</dbReference>
<dbReference type="GO" id="GO:0140662">
    <property type="term" value="F:ATP-dependent protein folding chaperone"/>
    <property type="evidence" value="ECO:0007669"/>
    <property type="project" value="InterPro"/>
</dbReference>
<dbReference type="GO" id="GO:0051082">
    <property type="term" value="F:unfolded protein binding"/>
    <property type="evidence" value="ECO:0007669"/>
    <property type="project" value="InterPro"/>
</dbReference>
<dbReference type="GO" id="GO:0016226">
    <property type="term" value="P:iron-sulfur cluster assembly"/>
    <property type="evidence" value="ECO:0007669"/>
    <property type="project" value="InterPro"/>
</dbReference>
<dbReference type="CDD" id="cd10236">
    <property type="entry name" value="ASKHA_NBD_HSP70_HscA"/>
    <property type="match status" value="1"/>
</dbReference>
<dbReference type="FunFam" id="3.30.420.40:FF:000046">
    <property type="entry name" value="Chaperone protein HscA"/>
    <property type="match status" value="1"/>
</dbReference>
<dbReference type="FunFam" id="2.60.34.10:FF:000005">
    <property type="entry name" value="Chaperone protein HscA homolog"/>
    <property type="match status" value="1"/>
</dbReference>
<dbReference type="Gene3D" id="1.20.1270.10">
    <property type="match status" value="1"/>
</dbReference>
<dbReference type="Gene3D" id="3.30.420.40">
    <property type="match status" value="2"/>
</dbReference>
<dbReference type="Gene3D" id="3.90.640.10">
    <property type="entry name" value="Actin, Chain A, domain 4"/>
    <property type="match status" value="1"/>
</dbReference>
<dbReference type="Gene3D" id="2.60.34.10">
    <property type="entry name" value="Substrate Binding Domain Of DNAk, Chain A, domain 1"/>
    <property type="match status" value="1"/>
</dbReference>
<dbReference type="HAMAP" id="MF_00679">
    <property type="entry name" value="HscA"/>
    <property type="match status" value="1"/>
</dbReference>
<dbReference type="InterPro" id="IPR043129">
    <property type="entry name" value="ATPase_NBD"/>
</dbReference>
<dbReference type="InterPro" id="IPR018181">
    <property type="entry name" value="Heat_shock_70_CS"/>
</dbReference>
<dbReference type="InterPro" id="IPR042039">
    <property type="entry name" value="HscA_NBD"/>
</dbReference>
<dbReference type="InterPro" id="IPR029048">
    <property type="entry name" value="HSP70_C_sf"/>
</dbReference>
<dbReference type="InterPro" id="IPR029047">
    <property type="entry name" value="HSP70_peptide-bd_sf"/>
</dbReference>
<dbReference type="InterPro" id="IPR013126">
    <property type="entry name" value="Hsp_70_fam"/>
</dbReference>
<dbReference type="InterPro" id="IPR010236">
    <property type="entry name" value="ISC_FeS_clus_asmbl_HscA"/>
</dbReference>
<dbReference type="NCBIfam" id="TIGR01991">
    <property type="entry name" value="HscA"/>
    <property type="match status" value="1"/>
</dbReference>
<dbReference type="NCBIfam" id="NF003520">
    <property type="entry name" value="PRK05183.1"/>
    <property type="match status" value="1"/>
</dbReference>
<dbReference type="PANTHER" id="PTHR19375">
    <property type="entry name" value="HEAT SHOCK PROTEIN 70KDA"/>
    <property type="match status" value="1"/>
</dbReference>
<dbReference type="Pfam" id="PF00012">
    <property type="entry name" value="HSP70"/>
    <property type="match status" value="1"/>
</dbReference>
<dbReference type="PRINTS" id="PR00301">
    <property type="entry name" value="HEATSHOCK70"/>
</dbReference>
<dbReference type="SUPFAM" id="SSF53067">
    <property type="entry name" value="Actin-like ATPase domain"/>
    <property type="match status" value="2"/>
</dbReference>
<dbReference type="SUPFAM" id="SSF100934">
    <property type="entry name" value="Heat shock protein 70kD (HSP70), C-terminal subdomain"/>
    <property type="match status" value="1"/>
</dbReference>
<dbReference type="SUPFAM" id="SSF100920">
    <property type="entry name" value="Heat shock protein 70kD (HSP70), peptide-binding domain"/>
    <property type="match status" value="1"/>
</dbReference>
<dbReference type="PROSITE" id="PS00297">
    <property type="entry name" value="HSP70_1"/>
    <property type="match status" value="1"/>
</dbReference>
<dbReference type="PROSITE" id="PS00329">
    <property type="entry name" value="HSP70_2"/>
    <property type="match status" value="1"/>
</dbReference>
<dbReference type="PROSITE" id="PS01036">
    <property type="entry name" value="HSP70_3"/>
    <property type="match status" value="1"/>
</dbReference>
<keyword id="KW-0067">ATP-binding</keyword>
<keyword id="KW-0143">Chaperone</keyword>
<keyword id="KW-0547">Nucleotide-binding</keyword>
<keyword id="KW-1185">Reference proteome</keyword>
<evidence type="ECO:0000255" key="1">
    <source>
        <dbReference type="HAMAP-Rule" id="MF_00679"/>
    </source>
</evidence>
<comment type="function">
    <text evidence="1">Chaperone involved in the maturation of iron-sulfur cluster-containing proteins. Has a low intrinsic ATPase activity which is markedly stimulated by HscB. Involved in the maturation of IscU.</text>
</comment>
<comment type="similarity">
    <text evidence="1">Belongs to the heat shock protein 70 family.</text>
</comment>
<name>HSCA_PROMH</name>
<reference key="1">
    <citation type="journal article" date="2008" name="J. Bacteriol.">
        <title>Complete genome sequence of uropathogenic Proteus mirabilis, a master of both adherence and motility.</title>
        <authorList>
            <person name="Pearson M.M."/>
            <person name="Sebaihia M."/>
            <person name="Churcher C."/>
            <person name="Quail M.A."/>
            <person name="Seshasayee A.S."/>
            <person name="Luscombe N.M."/>
            <person name="Abdellah Z."/>
            <person name="Arrosmith C."/>
            <person name="Atkin B."/>
            <person name="Chillingworth T."/>
            <person name="Hauser H."/>
            <person name="Jagels K."/>
            <person name="Moule S."/>
            <person name="Mungall K."/>
            <person name="Norbertczak H."/>
            <person name="Rabbinowitsch E."/>
            <person name="Walker D."/>
            <person name="Whithead S."/>
            <person name="Thomson N.R."/>
            <person name="Rather P.N."/>
            <person name="Parkhill J."/>
            <person name="Mobley H.L.T."/>
        </authorList>
    </citation>
    <scope>NUCLEOTIDE SEQUENCE [LARGE SCALE GENOMIC DNA]</scope>
    <source>
        <strain>HI4320</strain>
    </source>
</reference>
<gene>
    <name evidence="1" type="primary">hscA</name>
    <name type="ordered locus">PMI1856</name>
</gene>